<comment type="catalytic activity">
    <reaction>
        <text>aldehydo-D-galactose 6-phosphate = keto-D-tagatose 6-phosphate</text>
        <dbReference type="Rhea" id="RHEA:13033"/>
        <dbReference type="ChEBI" id="CHEBI:58255"/>
        <dbReference type="ChEBI" id="CHEBI:134283"/>
        <dbReference type="EC" id="5.3.1.26"/>
    </reaction>
</comment>
<comment type="pathway">
    <text>Carbohydrate metabolism; D-galactose 6-phosphate degradation; D-tagatose 6-phosphate from D-galactose 6-phosphate: step 1/1.</text>
</comment>
<comment type="subunit">
    <text evidence="1">Heteromultimeric protein consisting of LacA and LacB.</text>
</comment>
<comment type="induction">
    <text evidence="1">By lactose or galactose. The operon consists of lacABCDFEGX.</text>
</comment>
<comment type="miscellaneous">
    <text>This gene was sequenced from pMG820, a laboratory-derived deletion of the naturally occurring plasmid pLP712.</text>
</comment>
<comment type="similarity">
    <text evidence="2">Belongs to the LacAB/RpiB family.</text>
</comment>
<dbReference type="EC" id="5.3.1.26"/>
<dbReference type="EMBL" id="M60447">
    <property type="protein sequence ID" value="AAA25177.1"/>
    <property type="molecule type" value="Genomic_DNA"/>
</dbReference>
<dbReference type="EMBL" id="M65190">
    <property type="protein sequence ID" value="AAA25168.1"/>
    <property type="molecule type" value="Genomic_DNA"/>
</dbReference>
<dbReference type="PIR" id="A39778">
    <property type="entry name" value="A39778"/>
</dbReference>
<dbReference type="RefSeq" id="WP_003131727.1">
    <property type="nucleotide sequence ID" value="NZ_WUBD01000035.1"/>
</dbReference>
<dbReference type="RefSeq" id="YP_004761520.1">
    <property type="nucleotide sequence ID" value="NC_015862.1"/>
</dbReference>
<dbReference type="RefSeq" id="YP_005863086.1">
    <property type="nucleotide sequence ID" value="NC_017478.1"/>
</dbReference>
<dbReference type="SMR" id="P23494"/>
<dbReference type="KEGG" id="ag:AAA25177"/>
<dbReference type="UniPathway" id="UPA00702">
    <property type="reaction ID" value="UER00714"/>
</dbReference>
<dbReference type="PRO" id="PR:P23494"/>
<dbReference type="GO" id="GO:0050044">
    <property type="term" value="F:galactose-6-phosphate isomerase activity"/>
    <property type="evidence" value="ECO:0007669"/>
    <property type="project" value="UniProtKB-UniRule"/>
</dbReference>
<dbReference type="GO" id="GO:0004751">
    <property type="term" value="F:ribose-5-phosphate isomerase activity"/>
    <property type="evidence" value="ECO:0007669"/>
    <property type="project" value="TreeGrafter"/>
</dbReference>
<dbReference type="GO" id="GO:0019316">
    <property type="term" value="P:D-allose catabolic process"/>
    <property type="evidence" value="ECO:0007669"/>
    <property type="project" value="TreeGrafter"/>
</dbReference>
<dbReference type="GO" id="GO:0019388">
    <property type="term" value="P:galactose catabolic process"/>
    <property type="evidence" value="ECO:0007669"/>
    <property type="project" value="UniProtKB-UniPathway"/>
</dbReference>
<dbReference type="GO" id="GO:0019512">
    <property type="term" value="P:lactose catabolic process via tagatose-6-phosphate"/>
    <property type="evidence" value="ECO:0007669"/>
    <property type="project" value="UniProtKB-UniRule"/>
</dbReference>
<dbReference type="GO" id="GO:0009052">
    <property type="term" value="P:pentose-phosphate shunt, non-oxidative branch"/>
    <property type="evidence" value="ECO:0007669"/>
    <property type="project" value="TreeGrafter"/>
</dbReference>
<dbReference type="Gene3D" id="3.40.1400.10">
    <property type="entry name" value="Sugar-phosphate isomerase, RpiB/LacA/LacB"/>
    <property type="match status" value="1"/>
</dbReference>
<dbReference type="HAMAP" id="MF_01555">
    <property type="entry name" value="LacA"/>
    <property type="match status" value="1"/>
</dbReference>
<dbReference type="InterPro" id="IPR004783">
    <property type="entry name" value="LacA"/>
</dbReference>
<dbReference type="InterPro" id="IPR003500">
    <property type="entry name" value="RpiB_LacA_LacB"/>
</dbReference>
<dbReference type="InterPro" id="IPR036569">
    <property type="entry name" value="RpiB_LacA_LacB_sf"/>
</dbReference>
<dbReference type="NCBIfam" id="TIGR01118">
    <property type="entry name" value="lacA"/>
    <property type="match status" value="1"/>
</dbReference>
<dbReference type="NCBIfam" id="NF006380">
    <property type="entry name" value="PRK08621.1"/>
    <property type="match status" value="1"/>
</dbReference>
<dbReference type="NCBIfam" id="NF009257">
    <property type="entry name" value="PRK12613.1"/>
    <property type="match status" value="1"/>
</dbReference>
<dbReference type="NCBIfam" id="TIGR00689">
    <property type="entry name" value="rpiB_lacA_lacB"/>
    <property type="match status" value="1"/>
</dbReference>
<dbReference type="PANTHER" id="PTHR30345:SF5">
    <property type="entry name" value="GALACTOSE-6-PHOSPHATE ISOMERASE SUBUNIT LACA"/>
    <property type="match status" value="1"/>
</dbReference>
<dbReference type="PANTHER" id="PTHR30345">
    <property type="entry name" value="RIBOSE-5-PHOSPHATE ISOMERASE B"/>
    <property type="match status" value="1"/>
</dbReference>
<dbReference type="Pfam" id="PF02502">
    <property type="entry name" value="LacAB_rpiB"/>
    <property type="match status" value="1"/>
</dbReference>
<dbReference type="PIRSF" id="PIRSF005384">
    <property type="entry name" value="RpiB_LacA_B"/>
    <property type="match status" value="1"/>
</dbReference>
<dbReference type="SUPFAM" id="SSF89623">
    <property type="entry name" value="Ribose/Galactose isomerase RpiB/AlsB"/>
    <property type="match status" value="1"/>
</dbReference>
<feature type="chain" id="PRO_0000208104" description="Galactose-6-phosphate isomerase subunit LacA">
    <location>
        <begin position="1"/>
        <end position="141"/>
    </location>
</feature>
<accession>P23494</accession>
<protein>
    <recommendedName>
        <fullName>Galactose-6-phosphate isomerase subunit LacA</fullName>
        <ecNumber>5.3.1.26</ecNumber>
    </recommendedName>
</protein>
<evidence type="ECO:0000269" key="1">
    <source>
    </source>
</evidence>
<evidence type="ECO:0000305" key="2"/>
<name>LACA_LACLL</name>
<gene>
    <name type="primary">lacA</name>
</gene>
<sequence>MAIVVGADLKGTRLKDVVKNFLVEEGFEVIDVTKDGQDFVDVTLAVASEVNKDEQNLGIVIDAYGAGPFMVATKIKGMVAAEVSDERSAYMTRGHNNARMITVGAEIVGDELAKNIAKAFVNGKYDGGRHQVRVDMLNKMC</sequence>
<proteinExistence type="evidence at protein level"/>
<organism>
    <name type="scientific">Lactococcus lactis subsp. lactis</name>
    <name type="common">Streptococcus lactis</name>
    <dbReference type="NCBI Taxonomy" id="1360"/>
    <lineage>
        <taxon>Bacteria</taxon>
        <taxon>Bacillati</taxon>
        <taxon>Bacillota</taxon>
        <taxon>Bacilli</taxon>
        <taxon>Lactobacillales</taxon>
        <taxon>Streptococcaceae</taxon>
        <taxon>Lactococcus</taxon>
    </lineage>
</organism>
<reference key="1">
    <citation type="journal article" date="1991" name="J. Biol. Chem.">
        <title>Molecular cloning, characterization, and nucleotide sequence of the tagatose 6-phosphate pathway gene cluster of the lactose operon of Lactococcus lactis.</title>
        <authorList>
            <person name="van Rooijen R.J."/>
            <person name="van Schalkwijk S."/>
            <person name="de Vos W.M."/>
        </authorList>
    </citation>
    <scope>NUCLEOTIDE SEQUENCE [GENOMIC DNA]</scope>
    <scope>FUNCTION</scope>
    <scope>SUBUNIT</scope>
    <scope>OPERON STRUCTURE</scope>
    <scope>INDUCTION</scope>
    <source>
        <strain>MG1820</strain>
    </source>
</reference>
<geneLocation type="plasmid">
    <name>pLP712</name>
</geneLocation>
<keyword id="KW-0413">Isomerase</keyword>
<keyword id="KW-0423">Lactose metabolism</keyword>
<keyword id="KW-0614">Plasmid</keyword>